<reference key="1">
    <citation type="journal article" date="2009" name="J. Bacteriol.">
        <title>Complete genome sequence and comparative genome analysis of enteropathogenic Escherichia coli O127:H6 strain E2348/69.</title>
        <authorList>
            <person name="Iguchi A."/>
            <person name="Thomson N.R."/>
            <person name="Ogura Y."/>
            <person name="Saunders D."/>
            <person name="Ooka T."/>
            <person name="Henderson I.R."/>
            <person name="Harris D."/>
            <person name="Asadulghani M."/>
            <person name="Kurokawa K."/>
            <person name="Dean P."/>
            <person name="Kenny B."/>
            <person name="Quail M.A."/>
            <person name="Thurston S."/>
            <person name="Dougan G."/>
            <person name="Hayashi T."/>
            <person name="Parkhill J."/>
            <person name="Frankel G."/>
        </authorList>
    </citation>
    <scope>NUCLEOTIDE SEQUENCE [LARGE SCALE GENOMIC DNA]</scope>
    <source>
        <strain>E2348/69 / EPEC</strain>
    </source>
</reference>
<accession>B7UGN7</accession>
<dbReference type="EC" id="6.3.3.1" evidence="1"/>
<dbReference type="EMBL" id="FM180568">
    <property type="protein sequence ID" value="CAS10272.1"/>
    <property type="molecule type" value="Genomic_DNA"/>
</dbReference>
<dbReference type="RefSeq" id="WP_001339839.1">
    <property type="nucleotide sequence ID" value="NC_011601.1"/>
</dbReference>
<dbReference type="SMR" id="B7UGN7"/>
<dbReference type="KEGG" id="ecg:E2348C_2724"/>
<dbReference type="HOGENOM" id="CLU_047116_0_0_6"/>
<dbReference type="UniPathway" id="UPA00074">
    <property type="reaction ID" value="UER00129"/>
</dbReference>
<dbReference type="Proteomes" id="UP000008205">
    <property type="component" value="Chromosome"/>
</dbReference>
<dbReference type="GO" id="GO:0005829">
    <property type="term" value="C:cytosol"/>
    <property type="evidence" value="ECO:0007669"/>
    <property type="project" value="TreeGrafter"/>
</dbReference>
<dbReference type="GO" id="GO:0005524">
    <property type="term" value="F:ATP binding"/>
    <property type="evidence" value="ECO:0007669"/>
    <property type="project" value="UniProtKB-KW"/>
</dbReference>
<dbReference type="GO" id="GO:0004637">
    <property type="term" value="F:phosphoribosylamine-glycine ligase activity"/>
    <property type="evidence" value="ECO:0007669"/>
    <property type="project" value="TreeGrafter"/>
</dbReference>
<dbReference type="GO" id="GO:0004641">
    <property type="term" value="F:phosphoribosylformylglycinamidine cyclo-ligase activity"/>
    <property type="evidence" value="ECO:0007669"/>
    <property type="project" value="UniProtKB-UniRule"/>
</dbReference>
<dbReference type="GO" id="GO:0006189">
    <property type="term" value="P:'de novo' IMP biosynthetic process"/>
    <property type="evidence" value="ECO:0007669"/>
    <property type="project" value="UniProtKB-UniRule"/>
</dbReference>
<dbReference type="GO" id="GO:0046084">
    <property type="term" value="P:adenine biosynthetic process"/>
    <property type="evidence" value="ECO:0007669"/>
    <property type="project" value="TreeGrafter"/>
</dbReference>
<dbReference type="CDD" id="cd02196">
    <property type="entry name" value="PurM"/>
    <property type="match status" value="1"/>
</dbReference>
<dbReference type="FunFam" id="3.30.1330.10:FF:000001">
    <property type="entry name" value="Phosphoribosylformylglycinamidine cyclo-ligase"/>
    <property type="match status" value="1"/>
</dbReference>
<dbReference type="FunFam" id="3.90.650.10:FF:000001">
    <property type="entry name" value="Phosphoribosylformylglycinamidine cyclo-ligase"/>
    <property type="match status" value="1"/>
</dbReference>
<dbReference type="Gene3D" id="3.90.650.10">
    <property type="entry name" value="PurM-like C-terminal domain"/>
    <property type="match status" value="1"/>
</dbReference>
<dbReference type="Gene3D" id="3.30.1330.10">
    <property type="entry name" value="PurM-like, N-terminal domain"/>
    <property type="match status" value="1"/>
</dbReference>
<dbReference type="HAMAP" id="MF_00741">
    <property type="entry name" value="AIRS"/>
    <property type="match status" value="1"/>
</dbReference>
<dbReference type="InterPro" id="IPR010918">
    <property type="entry name" value="PurM-like_C_dom"/>
</dbReference>
<dbReference type="InterPro" id="IPR036676">
    <property type="entry name" value="PurM-like_C_sf"/>
</dbReference>
<dbReference type="InterPro" id="IPR016188">
    <property type="entry name" value="PurM-like_N"/>
</dbReference>
<dbReference type="InterPro" id="IPR036921">
    <property type="entry name" value="PurM-like_N_sf"/>
</dbReference>
<dbReference type="InterPro" id="IPR004733">
    <property type="entry name" value="PurM_cligase"/>
</dbReference>
<dbReference type="NCBIfam" id="TIGR00878">
    <property type="entry name" value="purM"/>
    <property type="match status" value="1"/>
</dbReference>
<dbReference type="PANTHER" id="PTHR10520:SF12">
    <property type="entry name" value="TRIFUNCTIONAL PURINE BIOSYNTHETIC PROTEIN ADENOSINE-3"/>
    <property type="match status" value="1"/>
</dbReference>
<dbReference type="PANTHER" id="PTHR10520">
    <property type="entry name" value="TRIFUNCTIONAL PURINE BIOSYNTHETIC PROTEIN ADENOSINE-3-RELATED"/>
    <property type="match status" value="1"/>
</dbReference>
<dbReference type="Pfam" id="PF00586">
    <property type="entry name" value="AIRS"/>
    <property type="match status" value="1"/>
</dbReference>
<dbReference type="Pfam" id="PF02769">
    <property type="entry name" value="AIRS_C"/>
    <property type="match status" value="1"/>
</dbReference>
<dbReference type="SUPFAM" id="SSF56042">
    <property type="entry name" value="PurM C-terminal domain-like"/>
    <property type="match status" value="1"/>
</dbReference>
<dbReference type="SUPFAM" id="SSF55326">
    <property type="entry name" value="PurM N-terminal domain-like"/>
    <property type="match status" value="1"/>
</dbReference>
<sequence length="345" mass="36901">MTDKTSLSYKDAGVDIDAGNALVGRIKGVVKKTRRPEVMGGLGGFGALCALPQKYREPVLVSGTDGVGTKLRLAMDLKRHDTIGIDLVAMCVNDLVVQGAEPLFFLDYYATGKLDVDTASAVISGIAEGCLQSGCSLVGGETAEMPGMYHGEDYDVAGFCVGVVEKSEIIDGSKVSDGDVLIALGSSGPHSNGYSLVRKILEVSGCDPQTTELDGKPLADHLLAPTRIYVKSVLELIEKVDVHAIAHLTGGGFWENIPRVLPDNTRAVIDESSWQWPEVFNWLQTAGNVERHEMYRTFNCGVGMIIALPAPEVDKALALLNANGENAWKIGIIKASDSEQRVVIE</sequence>
<feature type="chain" id="PRO_1000148279" description="Phosphoribosylformylglycinamidine cyclo-ligase">
    <location>
        <begin position="1"/>
        <end position="345"/>
    </location>
</feature>
<name>PUR5_ECO27</name>
<organism>
    <name type="scientific">Escherichia coli O127:H6 (strain E2348/69 / EPEC)</name>
    <dbReference type="NCBI Taxonomy" id="574521"/>
    <lineage>
        <taxon>Bacteria</taxon>
        <taxon>Pseudomonadati</taxon>
        <taxon>Pseudomonadota</taxon>
        <taxon>Gammaproteobacteria</taxon>
        <taxon>Enterobacterales</taxon>
        <taxon>Enterobacteriaceae</taxon>
        <taxon>Escherichia</taxon>
    </lineage>
</organism>
<keyword id="KW-0067">ATP-binding</keyword>
<keyword id="KW-0963">Cytoplasm</keyword>
<keyword id="KW-0436">Ligase</keyword>
<keyword id="KW-0547">Nucleotide-binding</keyword>
<keyword id="KW-0658">Purine biosynthesis</keyword>
<keyword id="KW-1185">Reference proteome</keyword>
<proteinExistence type="inferred from homology"/>
<comment type="catalytic activity">
    <reaction evidence="1">
        <text>2-formamido-N(1)-(5-O-phospho-beta-D-ribosyl)acetamidine + ATP = 5-amino-1-(5-phospho-beta-D-ribosyl)imidazole + ADP + phosphate + H(+)</text>
        <dbReference type="Rhea" id="RHEA:23032"/>
        <dbReference type="ChEBI" id="CHEBI:15378"/>
        <dbReference type="ChEBI" id="CHEBI:30616"/>
        <dbReference type="ChEBI" id="CHEBI:43474"/>
        <dbReference type="ChEBI" id="CHEBI:137981"/>
        <dbReference type="ChEBI" id="CHEBI:147287"/>
        <dbReference type="ChEBI" id="CHEBI:456216"/>
        <dbReference type="EC" id="6.3.3.1"/>
    </reaction>
</comment>
<comment type="pathway">
    <text evidence="1">Purine metabolism; IMP biosynthesis via de novo pathway; 5-amino-1-(5-phospho-D-ribosyl)imidazole from N(2)-formyl-N(1)-(5-phospho-D-ribosyl)glycinamide: step 2/2.</text>
</comment>
<comment type="subcellular location">
    <subcellularLocation>
        <location evidence="1">Cytoplasm</location>
    </subcellularLocation>
</comment>
<comment type="similarity">
    <text evidence="1">Belongs to the AIR synthase family.</text>
</comment>
<protein>
    <recommendedName>
        <fullName evidence="1">Phosphoribosylformylglycinamidine cyclo-ligase</fullName>
        <ecNumber evidence="1">6.3.3.1</ecNumber>
    </recommendedName>
    <alternativeName>
        <fullName evidence="1">AIR synthase</fullName>
    </alternativeName>
    <alternativeName>
        <fullName evidence="1">AIRS</fullName>
    </alternativeName>
    <alternativeName>
        <fullName evidence="1">Phosphoribosyl-aminoimidazole synthetase</fullName>
    </alternativeName>
</protein>
<gene>
    <name evidence="1" type="primary">purM</name>
    <name type="ordered locus">E2348C_2724</name>
</gene>
<evidence type="ECO:0000255" key="1">
    <source>
        <dbReference type="HAMAP-Rule" id="MF_00741"/>
    </source>
</evidence>